<reference key="1">
    <citation type="journal article" date="2005" name="Nat. Biotechnol.">
        <title>Complete genome sequence of the acetic acid bacterium Gluconobacter oxydans.</title>
        <authorList>
            <person name="Prust C."/>
            <person name="Hoffmeister M."/>
            <person name="Liesegang H."/>
            <person name="Wiezer A."/>
            <person name="Fricke W.F."/>
            <person name="Ehrenreich A."/>
            <person name="Gottschalk G."/>
            <person name="Deppenmeier U."/>
        </authorList>
    </citation>
    <scope>NUCLEOTIDE SEQUENCE [LARGE SCALE GENOMIC DNA]</scope>
    <source>
        <strain>621H</strain>
    </source>
</reference>
<organism>
    <name type="scientific">Gluconobacter oxydans (strain 621H)</name>
    <name type="common">Gluconobacter suboxydans</name>
    <dbReference type="NCBI Taxonomy" id="290633"/>
    <lineage>
        <taxon>Bacteria</taxon>
        <taxon>Pseudomonadati</taxon>
        <taxon>Pseudomonadota</taxon>
        <taxon>Alphaproteobacteria</taxon>
        <taxon>Acetobacterales</taxon>
        <taxon>Acetobacteraceae</taxon>
        <taxon>Gluconobacter</taxon>
    </lineage>
</organism>
<name>MRAY_GLUOX</name>
<feature type="chain" id="PRO_0000108831" description="Phospho-N-acetylmuramoyl-pentapeptide-transferase">
    <location>
        <begin position="1"/>
        <end position="363"/>
    </location>
</feature>
<feature type="transmembrane region" description="Helical" evidence="1">
    <location>
        <begin position="27"/>
        <end position="47"/>
    </location>
</feature>
<feature type="transmembrane region" description="Helical" evidence="1">
    <location>
        <begin position="76"/>
        <end position="96"/>
    </location>
</feature>
<feature type="transmembrane region" description="Helical" evidence="1">
    <location>
        <begin position="97"/>
        <end position="117"/>
    </location>
</feature>
<feature type="transmembrane region" description="Helical" evidence="1">
    <location>
        <begin position="137"/>
        <end position="157"/>
    </location>
</feature>
<feature type="transmembrane region" description="Helical" evidence="1">
    <location>
        <begin position="171"/>
        <end position="191"/>
    </location>
</feature>
<feature type="transmembrane region" description="Helical" evidence="1">
    <location>
        <begin position="202"/>
        <end position="222"/>
    </location>
</feature>
<feature type="transmembrane region" description="Helical" evidence="1">
    <location>
        <begin position="242"/>
        <end position="262"/>
    </location>
</feature>
<feature type="transmembrane region" description="Helical" evidence="1">
    <location>
        <begin position="265"/>
        <end position="285"/>
    </location>
</feature>
<feature type="transmembrane region" description="Helical" evidence="1">
    <location>
        <begin position="292"/>
        <end position="312"/>
    </location>
</feature>
<feature type="transmembrane region" description="Helical" evidence="1">
    <location>
        <begin position="340"/>
        <end position="360"/>
    </location>
</feature>
<sequence>MLFNLIAAHDTSHGGFFNLFHYLTFRSGCACLTALVISLALGNPFIAQLKRIQREGQPIRTVGPERHILEKAGTPTMGGMLILIALFSATLLWADLTNGFVWAVMLTTAAFGAVGFADDYLKLSKRNTTGVSKRTRLGCEFLASLIAGIWLQSLTPPELRNMVAFPFVKDVLLPLGYAFPIFAMITITGFGNAVNFTDGLDGLAIVPVVIAALVFALISYLVGNHVFADYLQLHPVPGTGELAVFCAALIGAGLGFLWFNAPPAAVFMGDTGSLSLGGALGAVAVATKHELVLCIVGGVFVAETLSVVIQIFWFKRTGRRVFLMAPLHHHFEKKGWQEPKIVIRFWIVSIVLGLCGLATLKLR</sequence>
<evidence type="ECO:0000255" key="1">
    <source>
        <dbReference type="HAMAP-Rule" id="MF_00038"/>
    </source>
</evidence>
<keyword id="KW-0131">Cell cycle</keyword>
<keyword id="KW-0132">Cell division</keyword>
<keyword id="KW-0997">Cell inner membrane</keyword>
<keyword id="KW-1003">Cell membrane</keyword>
<keyword id="KW-0133">Cell shape</keyword>
<keyword id="KW-0961">Cell wall biogenesis/degradation</keyword>
<keyword id="KW-0460">Magnesium</keyword>
<keyword id="KW-0472">Membrane</keyword>
<keyword id="KW-0479">Metal-binding</keyword>
<keyword id="KW-0573">Peptidoglycan synthesis</keyword>
<keyword id="KW-1185">Reference proteome</keyword>
<keyword id="KW-0808">Transferase</keyword>
<keyword id="KW-0812">Transmembrane</keyword>
<keyword id="KW-1133">Transmembrane helix</keyword>
<dbReference type="EC" id="2.7.8.13" evidence="1"/>
<dbReference type="EMBL" id="CP000009">
    <property type="protein sequence ID" value="AAW59948.1"/>
    <property type="molecule type" value="Genomic_DNA"/>
</dbReference>
<dbReference type="RefSeq" id="WP_011251751.1">
    <property type="nucleotide sequence ID" value="NZ_LT900338.1"/>
</dbReference>
<dbReference type="SMR" id="Q5FUJ8"/>
<dbReference type="STRING" id="290633.GOX0155"/>
<dbReference type="GeneID" id="56904426"/>
<dbReference type="KEGG" id="gox:GOX0155"/>
<dbReference type="eggNOG" id="COG0472">
    <property type="taxonomic scope" value="Bacteria"/>
</dbReference>
<dbReference type="HOGENOM" id="CLU_023982_0_0_5"/>
<dbReference type="UniPathway" id="UPA00219"/>
<dbReference type="Proteomes" id="UP000006375">
    <property type="component" value="Chromosome"/>
</dbReference>
<dbReference type="GO" id="GO:0005886">
    <property type="term" value="C:plasma membrane"/>
    <property type="evidence" value="ECO:0007669"/>
    <property type="project" value="UniProtKB-SubCell"/>
</dbReference>
<dbReference type="GO" id="GO:0046872">
    <property type="term" value="F:metal ion binding"/>
    <property type="evidence" value="ECO:0007669"/>
    <property type="project" value="UniProtKB-KW"/>
</dbReference>
<dbReference type="GO" id="GO:0008963">
    <property type="term" value="F:phospho-N-acetylmuramoyl-pentapeptide-transferase activity"/>
    <property type="evidence" value="ECO:0007669"/>
    <property type="project" value="UniProtKB-UniRule"/>
</dbReference>
<dbReference type="GO" id="GO:0051992">
    <property type="term" value="F:UDP-N-acetylmuramoyl-L-alanyl-D-glutamyl-meso-2,6-diaminopimelyl-D-alanyl-D-alanine:undecaprenyl-phosphate transferase activity"/>
    <property type="evidence" value="ECO:0007669"/>
    <property type="project" value="RHEA"/>
</dbReference>
<dbReference type="GO" id="GO:0051301">
    <property type="term" value="P:cell division"/>
    <property type="evidence" value="ECO:0007669"/>
    <property type="project" value="UniProtKB-KW"/>
</dbReference>
<dbReference type="GO" id="GO:0071555">
    <property type="term" value="P:cell wall organization"/>
    <property type="evidence" value="ECO:0007669"/>
    <property type="project" value="UniProtKB-KW"/>
</dbReference>
<dbReference type="GO" id="GO:0009252">
    <property type="term" value="P:peptidoglycan biosynthetic process"/>
    <property type="evidence" value="ECO:0007669"/>
    <property type="project" value="UniProtKB-UniRule"/>
</dbReference>
<dbReference type="GO" id="GO:0008360">
    <property type="term" value="P:regulation of cell shape"/>
    <property type="evidence" value="ECO:0007669"/>
    <property type="project" value="UniProtKB-KW"/>
</dbReference>
<dbReference type="CDD" id="cd06852">
    <property type="entry name" value="GT_MraY"/>
    <property type="match status" value="1"/>
</dbReference>
<dbReference type="HAMAP" id="MF_00038">
    <property type="entry name" value="MraY"/>
    <property type="match status" value="1"/>
</dbReference>
<dbReference type="InterPro" id="IPR000715">
    <property type="entry name" value="Glycosyl_transferase_4"/>
</dbReference>
<dbReference type="InterPro" id="IPR003524">
    <property type="entry name" value="PNAcMuramoyl-5peptid_Trfase"/>
</dbReference>
<dbReference type="InterPro" id="IPR018480">
    <property type="entry name" value="PNAcMuramoyl-5peptid_Trfase_CS"/>
</dbReference>
<dbReference type="NCBIfam" id="TIGR00445">
    <property type="entry name" value="mraY"/>
    <property type="match status" value="1"/>
</dbReference>
<dbReference type="PANTHER" id="PTHR22926">
    <property type="entry name" value="PHOSPHO-N-ACETYLMURAMOYL-PENTAPEPTIDE-TRANSFERASE"/>
    <property type="match status" value="1"/>
</dbReference>
<dbReference type="PANTHER" id="PTHR22926:SF5">
    <property type="entry name" value="PHOSPHO-N-ACETYLMURAMOYL-PENTAPEPTIDE-TRANSFERASE HOMOLOG"/>
    <property type="match status" value="1"/>
</dbReference>
<dbReference type="Pfam" id="PF00953">
    <property type="entry name" value="Glycos_transf_4"/>
    <property type="match status" value="1"/>
</dbReference>
<dbReference type="PROSITE" id="PS01348">
    <property type="entry name" value="MRAY_2"/>
    <property type="match status" value="1"/>
</dbReference>
<gene>
    <name evidence="1" type="primary">mraY</name>
    <name type="ordered locus">GOX0155</name>
</gene>
<protein>
    <recommendedName>
        <fullName evidence="1">Phospho-N-acetylmuramoyl-pentapeptide-transferase</fullName>
        <ecNumber evidence="1">2.7.8.13</ecNumber>
    </recommendedName>
    <alternativeName>
        <fullName evidence="1">UDP-MurNAc-pentapeptide phosphotransferase</fullName>
    </alternativeName>
</protein>
<accession>Q5FUJ8</accession>
<comment type="function">
    <text evidence="1">Catalyzes the initial step of the lipid cycle reactions in the biosynthesis of the cell wall peptidoglycan: transfers peptidoglycan precursor phospho-MurNAc-pentapeptide from UDP-MurNAc-pentapeptide onto the lipid carrier undecaprenyl phosphate, yielding undecaprenyl-pyrophosphoryl-MurNAc-pentapeptide, known as lipid I.</text>
</comment>
<comment type="catalytic activity">
    <reaction evidence="1">
        <text>UDP-N-acetyl-alpha-D-muramoyl-L-alanyl-gamma-D-glutamyl-meso-2,6-diaminopimeloyl-D-alanyl-D-alanine + di-trans,octa-cis-undecaprenyl phosphate = di-trans,octa-cis-undecaprenyl diphospho-N-acetyl-alpha-D-muramoyl-L-alanyl-D-glutamyl-meso-2,6-diaminopimeloyl-D-alanyl-D-alanine + UMP</text>
        <dbReference type="Rhea" id="RHEA:28386"/>
        <dbReference type="ChEBI" id="CHEBI:57865"/>
        <dbReference type="ChEBI" id="CHEBI:60392"/>
        <dbReference type="ChEBI" id="CHEBI:61386"/>
        <dbReference type="ChEBI" id="CHEBI:61387"/>
        <dbReference type="EC" id="2.7.8.13"/>
    </reaction>
</comment>
<comment type="cofactor">
    <cofactor evidence="1">
        <name>Mg(2+)</name>
        <dbReference type="ChEBI" id="CHEBI:18420"/>
    </cofactor>
</comment>
<comment type="pathway">
    <text evidence="1">Cell wall biogenesis; peptidoglycan biosynthesis.</text>
</comment>
<comment type="subcellular location">
    <subcellularLocation>
        <location evidence="1">Cell inner membrane</location>
        <topology evidence="1">Multi-pass membrane protein</topology>
    </subcellularLocation>
</comment>
<comment type="similarity">
    <text evidence="1">Belongs to the glycosyltransferase 4 family. MraY subfamily.</text>
</comment>
<proteinExistence type="inferred from homology"/>